<name>RNP3_AERPE</name>
<organism>
    <name type="scientific">Aeropyrum pernix (strain ATCC 700893 / DSM 11879 / JCM 9820 / NBRC 100138 / K1)</name>
    <dbReference type="NCBI Taxonomy" id="272557"/>
    <lineage>
        <taxon>Archaea</taxon>
        <taxon>Thermoproteota</taxon>
        <taxon>Thermoprotei</taxon>
        <taxon>Desulfurococcales</taxon>
        <taxon>Desulfurococcaceae</taxon>
        <taxon>Aeropyrum</taxon>
    </lineage>
</organism>
<evidence type="ECO:0000255" key="1">
    <source>
        <dbReference type="HAMAP-Rule" id="MF_00756"/>
    </source>
</evidence>
<gene>
    <name evidence="1" type="primary">rnp3</name>
    <name type="ordered locus">APE_1450.1</name>
</gene>
<accession>Q9YC00</accession>
<keyword id="KW-0963">Cytoplasm</keyword>
<keyword id="KW-0255">Endonuclease</keyword>
<keyword id="KW-0378">Hydrolase</keyword>
<keyword id="KW-0540">Nuclease</keyword>
<keyword id="KW-1185">Reference proteome</keyword>
<keyword id="KW-0819">tRNA processing</keyword>
<protein>
    <recommendedName>
        <fullName evidence="1">Ribonuclease P protein component 3</fullName>
        <shortName evidence="1">RNase P component 3</shortName>
        <ecNumber evidence="1">3.1.26.5</ecNumber>
    </recommendedName>
    <alternativeName>
        <fullName evidence="1">Rpp30</fullName>
    </alternativeName>
</protein>
<comment type="function">
    <text evidence="1">Part of ribonuclease P, a protein complex that generates mature tRNA molecules by cleaving their 5'-ends.</text>
</comment>
<comment type="catalytic activity">
    <reaction evidence="1">
        <text>Endonucleolytic cleavage of RNA, removing 5'-extranucleotides from tRNA precursor.</text>
        <dbReference type="EC" id="3.1.26.5"/>
    </reaction>
</comment>
<comment type="subunit">
    <text evidence="1">Consists of a catalytic RNA component and at least 4-5 protein subunits.</text>
</comment>
<comment type="subcellular location">
    <subcellularLocation>
        <location evidence="1">Cytoplasm</location>
    </subcellularLocation>
</comment>
<comment type="similarity">
    <text evidence="1">Belongs to the eukaryotic/archaeal RNase P protein component 3 family.</text>
</comment>
<reference key="1">
    <citation type="journal article" date="1999" name="DNA Res.">
        <title>Complete genome sequence of an aerobic hyper-thermophilic crenarchaeon, Aeropyrum pernix K1.</title>
        <authorList>
            <person name="Kawarabayasi Y."/>
            <person name="Hino Y."/>
            <person name="Horikawa H."/>
            <person name="Yamazaki S."/>
            <person name="Haikawa Y."/>
            <person name="Jin-no K."/>
            <person name="Takahashi M."/>
            <person name="Sekine M."/>
            <person name="Baba S."/>
            <person name="Ankai A."/>
            <person name="Kosugi H."/>
            <person name="Hosoyama A."/>
            <person name="Fukui S."/>
            <person name="Nagai Y."/>
            <person name="Nishijima K."/>
            <person name="Nakazawa H."/>
            <person name="Takamiya M."/>
            <person name="Masuda S."/>
            <person name="Funahashi T."/>
            <person name="Tanaka T."/>
            <person name="Kudoh Y."/>
            <person name="Yamazaki J."/>
            <person name="Kushida N."/>
            <person name="Oguchi A."/>
            <person name="Aoki K."/>
            <person name="Kubota K."/>
            <person name="Nakamura Y."/>
            <person name="Nomura N."/>
            <person name="Sako Y."/>
            <person name="Kikuchi H."/>
        </authorList>
    </citation>
    <scope>NUCLEOTIDE SEQUENCE [LARGE SCALE GENOMIC DNA]</scope>
    <source>
        <strain>ATCC 700893 / DSM 11879 / JCM 9820 / NBRC 100138 / K1</strain>
    </source>
</reference>
<proteinExistence type="inferred from homology"/>
<sequence length="211" mass="23083">MGLIDISVKPQTEQCSEVLRTAGRLGYTAVAIPPESADECMSLEGDGIPRLYRRGYVEASTRRDVRRAAEKLAGVVDFIVVKPLTLEAARYAAANKRVHIIRVDGSNLWAADRGTAEIMAQRGWGALEVSLRNLTLNPGSPAAWRALAVVLRRSFAYGVHVFLASDAEEPHELWSPYSGASLAALLGVPWSHAMLYNSEERLRILLDASRA</sequence>
<feature type="chain" id="PRO_0000140035" description="Ribonuclease P protein component 3">
    <location>
        <begin position="1"/>
        <end position="211"/>
    </location>
</feature>
<dbReference type="EC" id="3.1.26.5" evidence="1"/>
<dbReference type="EMBL" id="BA000002">
    <property type="protein sequence ID" value="BAA80448.2"/>
    <property type="molecule type" value="Genomic_DNA"/>
</dbReference>
<dbReference type="PIR" id="B72624">
    <property type="entry name" value="B72624"/>
</dbReference>
<dbReference type="RefSeq" id="WP_010866379.1">
    <property type="nucleotide sequence ID" value="NC_000854.2"/>
</dbReference>
<dbReference type="SMR" id="Q9YC00"/>
<dbReference type="STRING" id="272557.APE_1450.1"/>
<dbReference type="EnsemblBacteria" id="BAA80448">
    <property type="protein sequence ID" value="BAA80448"/>
    <property type="gene ID" value="APE_1450.1"/>
</dbReference>
<dbReference type="GeneID" id="1446024"/>
<dbReference type="KEGG" id="ape:APE_1450.1"/>
<dbReference type="eggNOG" id="arCOG00307">
    <property type="taxonomic scope" value="Archaea"/>
</dbReference>
<dbReference type="Proteomes" id="UP000002518">
    <property type="component" value="Chromosome"/>
</dbReference>
<dbReference type="GO" id="GO:0005737">
    <property type="term" value="C:cytoplasm"/>
    <property type="evidence" value="ECO:0007669"/>
    <property type="project" value="UniProtKB-SubCell"/>
</dbReference>
<dbReference type="GO" id="GO:0030677">
    <property type="term" value="C:ribonuclease P complex"/>
    <property type="evidence" value="ECO:0007669"/>
    <property type="project" value="UniProtKB-UniRule"/>
</dbReference>
<dbReference type="GO" id="GO:0004526">
    <property type="term" value="F:ribonuclease P activity"/>
    <property type="evidence" value="ECO:0007669"/>
    <property type="project" value="UniProtKB-UniRule"/>
</dbReference>
<dbReference type="GO" id="GO:0001682">
    <property type="term" value="P:tRNA 5'-leader removal"/>
    <property type="evidence" value="ECO:0007669"/>
    <property type="project" value="UniProtKB-UniRule"/>
</dbReference>
<dbReference type="Gene3D" id="3.20.20.140">
    <property type="entry name" value="Metal-dependent hydrolases"/>
    <property type="match status" value="1"/>
</dbReference>
<dbReference type="HAMAP" id="MF_00756">
    <property type="entry name" value="RNase_P_3"/>
    <property type="match status" value="1"/>
</dbReference>
<dbReference type="InterPro" id="IPR016195">
    <property type="entry name" value="Pol/histidinol_Pase-like"/>
</dbReference>
<dbReference type="InterPro" id="IPR023539">
    <property type="entry name" value="RNase_P_comp-3_arc"/>
</dbReference>
<dbReference type="InterPro" id="IPR002738">
    <property type="entry name" value="RNase_P_p30"/>
</dbReference>
<dbReference type="Pfam" id="PF01876">
    <property type="entry name" value="RNase_P_p30"/>
    <property type="match status" value="1"/>
</dbReference>
<dbReference type="SUPFAM" id="SSF89550">
    <property type="entry name" value="PHP domain-like"/>
    <property type="match status" value="1"/>
</dbReference>